<reference key="1">
    <citation type="submission" date="1995-04" db="EMBL/GenBank/DDBJ databases">
        <authorList>
            <person name="Savolainen V."/>
        </authorList>
    </citation>
    <scope>NUCLEOTIDE SEQUENCE [GENOMIC DNA]</scope>
    <source>
        <strain>Sample PCO1</strain>
    </source>
</reference>
<reference key="2">
    <citation type="journal article" date="1994" name="Mol. Phylogenet. Evol.">
        <title>Molecular phylogeny of families related to Celastrales based on rbcL 5' flanking sequences.</title>
        <authorList>
            <person name="Savolainen V."/>
            <person name="Manen J.F."/>
            <person name="Douzery E.J.P."/>
            <person name="Spichiger R."/>
        </authorList>
    </citation>
    <scope>NUCLEOTIDE SEQUENCE [GENOMIC DNA] OF 1-55</scope>
    <source>
        <strain>Sample PCO1</strain>
    </source>
</reference>
<geneLocation type="chloroplast"/>
<keyword id="KW-0007">Acetylation</keyword>
<keyword id="KW-0113">Calvin cycle</keyword>
<keyword id="KW-0120">Carbon dioxide fixation</keyword>
<keyword id="KW-0150">Chloroplast</keyword>
<keyword id="KW-1015">Disulfide bond</keyword>
<keyword id="KW-0456">Lyase</keyword>
<keyword id="KW-0460">Magnesium</keyword>
<keyword id="KW-0479">Metal-binding</keyword>
<keyword id="KW-0488">Methylation</keyword>
<keyword id="KW-0503">Monooxygenase</keyword>
<keyword id="KW-0560">Oxidoreductase</keyword>
<keyword id="KW-0601">Photorespiration</keyword>
<keyword id="KW-0602">Photosynthesis</keyword>
<keyword id="KW-0934">Plastid</keyword>
<comment type="function">
    <text evidence="1">RuBisCO catalyzes two reactions: the carboxylation of D-ribulose 1,5-bisphosphate, the primary event in carbon dioxide fixation, as well as the oxidative fragmentation of the pentose substrate in the photorespiration process. Both reactions occur simultaneously and in competition at the same active site.</text>
</comment>
<comment type="catalytic activity">
    <reaction evidence="1">
        <text>2 (2R)-3-phosphoglycerate + 2 H(+) = D-ribulose 1,5-bisphosphate + CO2 + H2O</text>
        <dbReference type="Rhea" id="RHEA:23124"/>
        <dbReference type="ChEBI" id="CHEBI:15377"/>
        <dbReference type="ChEBI" id="CHEBI:15378"/>
        <dbReference type="ChEBI" id="CHEBI:16526"/>
        <dbReference type="ChEBI" id="CHEBI:57870"/>
        <dbReference type="ChEBI" id="CHEBI:58272"/>
        <dbReference type="EC" id="4.1.1.39"/>
    </reaction>
</comment>
<comment type="catalytic activity">
    <reaction evidence="1">
        <text>D-ribulose 1,5-bisphosphate + O2 = 2-phosphoglycolate + (2R)-3-phosphoglycerate + 2 H(+)</text>
        <dbReference type="Rhea" id="RHEA:36631"/>
        <dbReference type="ChEBI" id="CHEBI:15378"/>
        <dbReference type="ChEBI" id="CHEBI:15379"/>
        <dbReference type="ChEBI" id="CHEBI:57870"/>
        <dbReference type="ChEBI" id="CHEBI:58033"/>
        <dbReference type="ChEBI" id="CHEBI:58272"/>
    </reaction>
</comment>
<comment type="cofactor">
    <cofactor evidence="1">
        <name>Mg(2+)</name>
        <dbReference type="ChEBI" id="CHEBI:18420"/>
    </cofactor>
    <text evidence="1">Binds 1 Mg(2+) ion per subunit.</text>
</comment>
<comment type="subunit">
    <text evidence="1">Heterohexadecamer of 8 large chains and 8 small chains; disulfide-linked. The disulfide link is formed within the large subunit homodimers.</text>
</comment>
<comment type="subcellular location">
    <subcellularLocation>
        <location>Plastid</location>
        <location>Chloroplast</location>
    </subcellularLocation>
</comment>
<comment type="PTM">
    <text evidence="1">The disulfide bond which can form in the large chain dimeric partners within the hexadecamer appears to be associated with oxidative stress and protein turnover.</text>
</comment>
<comment type="miscellaneous">
    <text evidence="1">The basic functional RuBisCO is composed of a large chain homodimer in a 'head-to-tail' conformation. In form I RuBisCO this homodimer is arranged in a barrel-like tetramer with the small subunits forming a tetrameric 'cap' on each end of the 'barrel'.</text>
</comment>
<comment type="similarity">
    <text evidence="1">Belongs to the RuBisCO large chain family. Type I subfamily.</text>
</comment>
<gene>
    <name evidence="1" type="primary">rbcL</name>
</gene>
<protein>
    <recommendedName>
        <fullName evidence="1">Ribulose bisphosphate carboxylase large chain</fullName>
        <shortName evidence="1">RuBisCO large subunit</shortName>
        <ecNumber evidence="1">4.1.1.39</ecNumber>
    </recommendedName>
</protein>
<feature type="propeptide" id="PRO_0000031339" evidence="1">
    <location>
        <begin position="1"/>
        <end position="2"/>
    </location>
</feature>
<feature type="chain" id="PRO_0000031340" description="Ribulose bisphosphate carboxylase large chain">
    <location>
        <begin position="3"/>
        <end position="457" status="greater than"/>
    </location>
</feature>
<feature type="active site" description="Proton acceptor" evidence="1">
    <location>
        <position position="175"/>
    </location>
</feature>
<feature type="active site" description="Proton acceptor" evidence="1">
    <location>
        <position position="294"/>
    </location>
</feature>
<feature type="binding site" description="in homodimeric partner" evidence="1">
    <location>
        <position position="123"/>
    </location>
    <ligand>
        <name>substrate</name>
    </ligand>
</feature>
<feature type="binding site" evidence="1">
    <location>
        <position position="173"/>
    </location>
    <ligand>
        <name>substrate</name>
    </ligand>
</feature>
<feature type="binding site" evidence="1">
    <location>
        <position position="177"/>
    </location>
    <ligand>
        <name>substrate</name>
    </ligand>
</feature>
<feature type="binding site" description="via carbamate group" evidence="1">
    <location>
        <position position="201"/>
    </location>
    <ligand>
        <name>Mg(2+)</name>
        <dbReference type="ChEBI" id="CHEBI:18420"/>
    </ligand>
</feature>
<feature type="binding site" evidence="1">
    <location>
        <position position="203"/>
    </location>
    <ligand>
        <name>Mg(2+)</name>
        <dbReference type="ChEBI" id="CHEBI:18420"/>
    </ligand>
</feature>
<feature type="binding site" evidence="1">
    <location>
        <position position="204"/>
    </location>
    <ligand>
        <name>Mg(2+)</name>
        <dbReference type="ChEBI" id="CHEBI:18420"/>
    </ligand>
</feature>
<feature type="binding site" evidence="1">
    <location>
        <position position="295"/>
    </location>
    <ligand>
        <name>substrate</name>
    </ligand>
</feature>
<feature type="binding site" evidence="1">
    <location>
        <position position="327"/>
    </location>
    <ligand>
        <name>substrate</name>
    </ligand>
</feature>
<feature type="binding site" evidence="1">
    <location>
        <position position="379"/>
    </location>
    <ligand>
        <name>substrate</name>
    </ligand>
</feature>
<feature type="site" description="Transition state stabilizer" evidence="1">
    <location>
        <position position="334"/>
    </location>
</feature>
<feature type="modified residue" description="N-acetylproline" evidence="1">
    <location>
        <position position="3"/>
    </location>
</feature>
<feature type="modified residue" description="N6,N6,N6-trimethyllysine" evidence="1">
    <location>
        <position position="14"/>
    </location>
</feature>
<feature type="modified residue" description="N6-carboxylysine" evidence="1">
    <location>
        <position position="201"/>
    </location>
</feature>
<feature type="disulfide bond" description="Interchain; in linked form" evidence="1">
    <location>
        <position position="247"/>
    </location>
</feature>
<feature type="non-terminal residue">
    <location>
        <position position="457"/>
    </location>
</feature>
<sequence>MSPQTETKASVGFKAGVKEYKLTYYTPDYETKDTDILAAFRVTPQPGVPPEEAGAAVAAESSTGTWTTVWTDGLTSLDRYKGRCYHIEPVPGEESQFIAYVAYPLDLFEEGSVTNMFTSIVGNVFGFKALRALRLEDLRIPPAYVKTFQGPPHGIQVERDKLNKYGRPLLGCTIKPKLGLSAKNYGRAVYECLRGGLDFTKDDENVNSQPFMRWRDRFVFCAEALYKAQAETGEIKGHYLNATAGTCEEMNKRAVFARELGVPIVMHDYLTGGFTANTSLAHYCRDNGLLLHIHRAMHAVIDRQKNHGIHFRVLAKALRMSGGDHIHAGTVVGKLEGERDITSGFVDLLRDDFVKKDRSRGIYFTQDWVSLPGVLPVASGGIHVWHMPALTEIFGDDSVLQFGGGTLGHPWGNAPGAVANRVALEACVQARNEGRDLAREGNDIIREASKWSPELAA</sequence>
<proteinExistence type="inferred from homology"/>
<name>RBL_PHECO</name>
<organism>
    <name type="scientific">Phelline comosa</name>
    <dbReference type="NCBI Taxonomy" id="4304"/>
    <lineage>
        <taxon>Eukaryota</taxon>
        <taxon>Viridiplantae</taxon>
        <taxon>Streptophyta</taxon>
        <taxon>Embryophyta</taxon>
        <taxon>Tracheophyta</taxon>
        <taxon>Spermatophyta</taxon>
        <taxon>Magnoliopsida</taxon>
        <taxon>eudicotyledons</taxon>
        <taxon>Gunneridae</taxon>
        <taxon>Pentapetalae</taxon>
        <taxon>asterids</taxon>
        <taxon>campanulids</taxon>
        <taxon>Asterales</taxon>
        <taxon>Phellinaceae</taxon>
        <taxon>Phelline</taxon>
    </lineage>
</organism>
<accession>P31197</accession>
<dbReference type="EC" id="4.1.1.39" evidence="1"/>
<dbReference type="EMBL" id="X69748">
    <property type="protein sequence ID" value="CAA49403.1"/>
    <property type="molecule type" value="Genomic_DNA"/>
</dbReference>
<dbReference type="PIR" id="S31535">
    <property type="entry name" value="S31535"/>
</dbReference>
<dbReference type="SMR" id="P31197"/>
<dbReference type="GO" id="GO:0009507">
    <property type="term" value="C:chloroplast"/>
    <property type="evidence" value="ECO:0007669"/>
    <property type="project" value="UniProtKB-SubCell"/>
</dbReference>
<dbReference type="GO" id="GO:0000287">
    <property type="term" value="F:magnesium ion binding"/>
    <property type="evidence" value="ECO:0007669"/>
    <property type="project" value="InterPro"/>
</dbReference>
<dbReference type="GO" id="GO:0004497">
    <property type="term" value="F:monooxygenase activity"/>
    <property type="evidence" value="ECO:0007669"/>
    <property type="project" value="UniProtKB-KW"/>
</dbReference>
<dbReference type="GO" id="GO:0016984">
    <property type="term" value="F:ribulose-bisphosphate carboxylase activity"/>
    <property type="evidence" value="ECO:0007669"/>
    <property type="project" value="UniProtKB-EC"/>
</dbReference>
<dbReference type="GO" id="GO:0009853">
    <property type="term" value="P:photorespiration"/>
    <property type="evidence" value="ECO:0007669"/>
    <property type="project" value="UniProtKB-KW"/>
</dbReference>
<dbReference type="GO" id="GO:0019253">
    <property type="term" value="P:reductive pentose-phosphate cycle"/>
    <property type="evidence" value="ECO:0007669"/>
    <property type="project" value="UniProtKB-KW"/>
</dbReference>
<dbReference type="CDD" id="cd08212">
    <property type="entry name" value="RuBisCO_large_I"/>
    <property type="match status" value="1"/>
</dbReference>
<dbReference type="FunFam" id="3.20.20.110:FF:000001">
    <property type="entry name" value="Ribulose bisphosphate carboxylase large chain"/>
    <property type="match status" value="1"/>
</dbReference>
<dbReference type="FunFam" id="3.30.70.150:FF:000001">
    <property type="entry name" value="Ribulose bisphosphate carboxylase large chain"/>
    <property type="match status" value="1"/>
</dbReference>
<dbReference type="Gene3D" id="3.20.20.110">
    <property type="entry name" value="Ribulose bisphosphate carboxylase, large subunit, C-terminal domain"/>
    <property type="match status" value="1"/>
</dbReference>
<dbReference type="Gene3D" id="3.30.70.150">
    <property type="entry name" value="RuBisCO large subunit, N-terminal domain"/>
    <property type="match status" value="1"/>
</dbReference>
<dbReference type="HAMAP" id="MF_01338">
    <property type="entry name" value="RuBisCO_L_type1"/>
    <property type="match status" value="1"/>
</dbReference>
<dbReference type="InterPro" id="IPR033966">
    <property type="entry name" value="RuBisCO"/>
</dbReference>
<dbReference type="InterPro" id="IPR020878">
    <property type="entry name" value="RuBisCo_large_chain_AS"/>
</dbReference>
<dbReference type="InterPro" id="IPR000685">
    <property type="entry name" value="RuBisCO_lsu_C"/>
</dbReference>
<dbReference type="InterPro" id="IPR036376">
    <property type="entry name" value="RuBisCO_lsu_C_sf"/>
</dbReference>
<dbReference type="InterPro" id="IPR017443">
    <property type="entry name" value="RuBisCO_lsu_fd_N"/>
</dbReference>
<dbReference type="InterPro" id="IPR036422">
    <property type="entry name" value="RuBisCO_lsu_N_sf"/>
</dbReference>
<dbReference type="InterPro" id="IPR020888">
    <property type="entry name" value="RuBisCO_lsuI"/>
</dbReference>
<dbReference type="NCBIfam" id="NF003252">
    <property type="entry name" value="PRK04208.1"/>
    <property type="match status" value="1"/>
</dbReference>
<dbReference type="PANTHER" id="PTHR42704">
    <property type="entry name" value="RIBULOSE BISPHOSPHATE CARBOXYLASE"/>
    <property type="match status" value="1"/>
</dbReference>
<dbReference type="PANTHER" id="PTHR42704:SF15">
    <property type="entry name" value="RIBULOSE BISPHOSPHATE CARBOXYLASE LARGE CHAIN"/>
    <property type="match status" value="1"/>
</dbReference>
<dbReference type="Pfam" id="PF00016">
    <property type="entry name" value="RuBisCO_large"/>
    <property type="match status" value="1"/>
</dbReference>
<dbReference type="Pfam" id="PF02788">
    <property type="entry name" value="RuBisCO_large_N"/>
    <property type="match status" value="1"/>
</dbReference>
<dbReference type="SFLD" id="SFLDG01052">
    <property type="entry name" value="RuBisCO"/>
    <property type="match status" value="1"/>
</dbReference>
<dbReference type="SFLD" id="SFLDS00014">
    <property type="entry name" value="RuBisCO"/>
    <property type="match status" value="1"/>
</dbReference>
<dbReference type="SFLD" id="SFLDG00301">
    <property type="entry name" value="RuBisCO-like_proteins"/>
    <property type="match status" value="1"/>
</dbReference>
<dbReference type="SUPFAM" id="SSF51649">
    <property type="entry name" value="RuBisCo, C-terminal domain"/>
    <property type="match status" value="1"/>
</dbReference>
<dbReference type="SUPFAM" id="SSF54966">
    <property type="entry name" value="RuBisCO, large subunit, small (N-terminal) domain"/>
    <property type="match status" value="1"/>
</dbReference>
<dbReference type="PROSITE" id="PS00157">
    <property type="entry name" value="RUBISCO_LARGE"/>
    <property type="match status" value="1"/>
</dbReference>
<evidence type="ECO:0000255" key="1">
    <source>
        <dbReference type="HAMAP-Rule" id="MF_01338"/>
    </source>
</evidence>